<protein>
    <recommendedName>
        <fullName evidence="1">Aspartate carbamoyltransferase catalytic subunit</fullName>
        <ecNumber evidence="1">2.1.3.2</ecNumber>
    </recommendedName>
    <alternativeName>
        <fullName evidence="1">Aspartate transcarbamylase</fullName>
        <shortName evidence="1">ATCase</shortName>
    </alternativeName>
</protein>
<sequence>MEHFISIRDIGKKEILNILEEAEKMEELLNSEKHSNIMNGKILATLFYEPSTRTRLSFETAMKRLGGTVVGFTDIANTSVMKGETLPDTIKVINGYADLIVMRHPSDGAPRLACEYSNIPIINAGDGSNQHPSQTMLDLYTIKREIGHIDNIKIAFIGDLKYGRTVHSLCHALSFFENIEIVFIAPKELKIPKEITDDLDNKNKLYNNNIKYSETGDIDLTGMDVVYMTRIQKERFPDLSEYQKVKGTYKLTREHVEDKDLIIMHPLPRVDEIDISVDELPQAKYFKQSFYGVPVRMAILKILNEKNKNKKSEI</sequence>
<accession>A6UWP3</accession>
<keyword id="KW-0665">Pyrimidine biosynthesis</keyword>
<keyword id="KW-0808">Transferase</keyword>
<proteinExistence type="inferred from homology"/>
<evidence type="ECO:0000255" key="1">
    <source>
        <dbReference type="HAMAP-Rule" id="MF_00001"/>
    </source>
</evidence>
<organism>
    <name type="scientific">Methanococcus aeolicus (strain ATCC BAA-1280 / DSM 17508 / OCM 812 / Nankai-3)</name>
    <dbReference type="NCBI Taxonomy" id="419665"/>
    <lineage>
        <taxon>Archaea</taxon>
        <taxon>Methanobacteriati</taxon>
        <taxon>Methanobacteriota</taxon>
        <taxon>Methanomada group</taxon>
        <taxon>Methanococci</taxon>
        <taxon>Methanococcales</taxon>
        <taxon>Methanococcaceae</taxon>
        <taxon>Methanococcus</taxon>
    </lineage>
</organism>
<dbReference type="EC" id="2.1.3.2" evidence="1"/>
<dbReference type="EMBL" id="CP000743">
    <property type="protein sequence ID" value="ABR56915.1"/>
    <property type="molecule type" value="Genomic_DNA"/>
</dbReference>
<dbReference type="RefSeq" id="WP_011974047.1">
    <property type="nucleotide sequence ID" value="NC_009635.1"/>
</dbReference>
<dbReference type="SMR" id="A6UWP3"/>
<dbReference type="STRING" id="419665.Maeo_1339"/>
<dbReference type="GeneID" id="5327296"/>
<dbReference type="GeneID" id="75304817"/>
<dbReference type="KEGG" id="mae:Maeo_1339"/>
<dbReference type="eggNOG" id="arCOG00911">
    <property type="taxonomic scope" value="Archaea"/>
</dbReference>
<dbReference type="HOGENOM" id="CLU_043846_1_2_2"/>
<dbReference type="OrthoDB" id="7792at2157"/>
<dbReference type="UniPathway" id="UPA00070">
    <property type="reaction ID" value="UER00116"/>
</dbReference>
<dbReference type="Proteomes" id="UP000001106">
    <property type="component" value="Chromosome"/>
</dbReference>
<dbReference type="GO" id="GO:0016597">
    <property type="term" value="F:amino acid binding"/>
    <property type="evidence" value="ECO:0007669"/>
    <property type="project" value="InterPro"/>
</dbReference>
<dbReference type="GO" id="GO:0004070">
    <property type="term" value="F:aspartate carbamoyltransferase activity"/>
    <property type="evidence" value="ECO:0007669"/>
    <property type="project" value="UniProtKB-UniRule"/>
</dbReference>
<dbReference type="GO" id="GO:0006207">
    <property type="term" value="P:'de novo' pyrimidine nucleobase biosynthetic process"/>
    <property type="evidence" value="ECO:0007669"/>
    <property type="project" value="InterPro"/>
</dbReference>
<dbReference type="GO" id="GO:0044205">
    <property type="term" value="P:'de novo' UMP biosynthetic process"/>
    <property type="evidence" value="ECO:0007669"/>
    <property type="project" value="UniProtKB-UniRule"/>
</dbReference>
<dbReference type="GO" id="GO:0006520">
    <property type="term" value="P:amino acid metabolic process"/>
    <property type="evidence" value="ECO:0007669"/>
    <property type="project" value="InterPro"/>
</dbReference>
<dbReference type="FunFam" id="3.40.50.1370:FF:000001">
    <property type="entry name" value="Aspartate carbamoyltransferase"/>
    <property type="match status" value="1"/>
</dbReference>
<dbReference type="FunFam" id="3.40.50.1370:FF:000002">
    <property type="entry name" value="Aspartate carbamoyltransferase 2"/>
    <property type="match status" value="1"/>
</dbReference>
<dbReference type="Gene3D" id="3.40.50.1370">
    <property type="entry name" value="Aspartate/ornithine carbamoyltransferase"/>
    <property type="match status" value="2"/>
</dbReference>
<dbReference type="HAMAP" id="MF_00001">
    <property type="entry name" value="Asp_carb_tr"/>
    <property type="match status" value="1"/>
</dbReference>
<dbReference type="InterPro" id="IPR006132">
    <property type="entry name" value="Asp/Orn_carbamoyltranf_P-bd"/>
</dbReference>
<dbReference type="InterPro" id="IPR006130">
    <property type="entry name" value="Asp/Orn_carbamoylTrfase"/>
</dbReference>
<dbReference type="InterPro" id="IPR036901">
    <property type="entry name" value="Asp/Orn_carbamoylTrfase_sf"/>
</dbReference>
<dbReference type="InterPro" id="IPR002082">
    <property type="entry name" value="Asp_carbamoyltransf"/>
</dbReference>
<dbReference type="InterPro" id="IPR006131">
    <property type="entry name" value="Asp_carbamoyltransf_Asp/Orn-bd"/>
</dbReference>
<dbReference type="NCBIfam" id="TIGR00670">
    <property type="entry name" value="asp_carb_tr"/>
    <property type="match status" value="1"/>
</dbReference>
<dbReference type="NCBIfam" id="NF002032">
    <property type="entry name" value="PRK00856.1"/>
    <property type="match status" value="1"/>
</dbReference>
<dbReference type="PANTHER" id="PTHR45753:SF6">
    <property type="entry name" value="ASPARTATE CARBAMOYLTRANSFERASE"/>
    <property type="match status" value="1"/>
</dbReference>
<dbReference type="PANTHER" id="PTHR45753">
    <property type="entry name" value="ORNITHINE CARBAMOYLTRANSFERASE, MITOCHONDRIAL"/>
    <property type="match status" value="1"/>
</dbReference>
<dbReference type="Pfam" id="PF00185">
    <property type="entry name" value="OTCace"/>
    <property type="match status" value="1"/>
</dbReference>
<dbReference type="Pfam" id="PF02729">
    <property type="entry name" value="OTCace_N"/>
    <property type="match status" value="1"/>
</dbReference>
<dbReference type="PRINTS" id="PR00100">
    <property type="entry name" value="AOTCASE"/>
</dbReference>
<dbReference type="PRINTS" id="PR00101">
    <property type="entry name" value="ATCASE"/>
</dbReference>
<dbReference type="SUPFAM" id="SSF53671">
    <property type="entry name" value="Aspartate/ornithine carbamoyltransferase"/>
    <property type="match status" value="1"/>
</dbReference>
<dbReference type="PROSITE" id="PS00097">
    <property type="entry name" value="CARBAMOYLTRANSFERASE"/>
    <property type="match status" value="1"/>
</dbReference>
<gene>
    <name evidence="1" type="primary">pyrB</name>
    <name type="ordered locus">Maeo_1339</name>
</gene>
<name>PYRB_META3</name>
<feature type="chain" id="PRO_1000000013" description="Aspartate carbamoyltransferase catalytic subunit">
    <location>
        <begin position="1"/>
        <end position="314"/>
    </location>
</feature>
<feature type="binding site" evidence="1">
    <location>
        <position position="53"/>
    </location>
    <ligand>
        <name>carbamoyl phosphate</name>
        <dbReference type="ChEBI" id="CHEBI:58228"/>
    </ligand>
</feature>
<feature type="binding site" evidence="1">
    <location>
        <position position="54"/>
    </location>
    <ligand>
        <name>carbamoyl phosphate</name>
        <dbReference type="ChEBI" id="CHEBI:58228"/>
    </ligand>
</feature>
<feature type="binding site" evidence="1">
    <location>
        <position position="82"/>
    </location>
    <ligand>
        <name>L-aspartate</name>
        <dbReference type="ChEBI" id="CHEBI:29991"/>
    </ligand>
</feature>
<feature type="binding site" evidence="1">
    <location>
        <position position="103"/>
    </location>
    <ligand>
        <name>carbamoyl phosphate</name>
        <dbReference type="ChEBI" id="CHEBI:58228"/>
    </ligand>
</feature>
<feature type="binding site" evidence="1">
    <location>
        <position position="131"/>
    </location>
    <ligand>
        <name>carbamoyl phosphate</name>
        <dbReference type="ChEBI" id="CHEBI:58228"/>
    </ligand>
</feature>
<feature type="binding site" evidence="1">
    <location>
        <position position="134"/>
    </location>
    <ligand>
        <name>carbamoyl phosphate</name>
        <dbReference type="ChEBI" id="CHEBI:58228"/>
    </ligand>
</feature>
<feature type="binding site" evidence="1">
    <location>
        <position position="164"/>
    </location>
    <ligand>
        <name>L-aspartate</name>
        <dbReference type="ChEBI" id="CHEBI:29991"/>
    </ligand>
</feature>
<feature type="binding site" evidence="1">
    <location>
        <position position="230"/>
    </location>
    <ligand>
        <name>L-aspartate</name>
        <dbReference type="ChEBI" id="CHEBI:29991"/>
    </ligand>
</feature>
<feature type="binding site" evidence="1">
    <location>
        <position position="267"/>
    </location>
    <ligand>
        <name>carbamoyl phosphate</name>
        <dbReference type="ChEBI" id="CHEBI:58228"/>
    </ligand>
</feature>
<feature type="binding site" evidence="1">
    <location>
        <position position="268"/>
    </location>
    <ligand>
        <name>carbamoyl phosphate</name>
        <dbReference type="ChEBI" id="CHEBI:58228"/>
    </ligand>
</feature>
<reference key="1">
    <citation type="submission" date="2007-06" db="EMBL/GenBank/DDBJ databases">
        <title>Complete sequence of Methanococcus aeolicus Nankai-3.</title>
        <authorList>
            <consortium name="US DOE Joint Genome Institute"/>
            <person name="Copeland A."/>
            <person name="Lucas S."/>
            <person name="Lapidus A."/>
            <person name="Barry K."/>
            <person name="Glavina del Rio T."/>
            <person name="Dalin E."/>
            <person name="Tice H."/>
            <person name="Pitluck S."/>
            <person name="Chain P."/>
            <person name="Malfatti S."/>
            <person name="Shin M."/>
            <person name="Vergez L."/>
            <person name="Schmutz J."/>
            <person name="Larimer F."/>
            <person name="Land M."/>
            <person name="Hauser L."/>
            <person name="Kyrpides N."/>
            <person name="Lykidis A."/>
            <person name="Sieprawska-Lupa M."/>
            <person name="Whitman W.B."/>
            <person name="Richardson P."/>
        </authorList>
    </citation>
    <scope>NUCLEOTIDE SEQUENCE [LARGE SCALE GENOMIC DNA]</scope>
    <source>
        <strain>ATCC BAA-1280 / DSM 17508 / OCM 812 / Nankai-3</strain>
    </source>
</reference>
<comment type="function">
    <text evidence="1">Catalyzes the condensation of carbamoyl phosphate and aspartate to form carbamoyl aspartate and inorganic phosphate, the committed step in the de novo pyrimidine nucleotide biosynthesis pathway.</text>
</comment>
<comment type="catalytic activity">
    <reaction evidence="1">
        <text>carbamoyl phosphate + L-aspartate = N-carbamoyl-L-aspartate + phosphate + H(+)</text>
        <dbReference type="Rhea" id="RHEA:20013"/>
        <dbReference type="ChEBI" id="CHEBI:15378"/>
        <dbReference type="ChEBI" id="CHEBI:29991"/>
        <dbReference type="ChEBI" id="CHEBI:32814"/>
        <dbReference type="ChEBI" id="CHEBI:43474"/>
        <dbReference type="ChEBI" id="CHEBI:58228"/>
        <dbReference type="EC" id="2.1.3.2"/>
    </reaction>
</comment>
<comment type="pathway">
    <text evidence="1">Pyrimidine metabolism; UMP biosynthesis via de novo pathway; (S)-dihydroorotate from bicarbonate: step 2/3.</text>
</comment>
<comment type="subunit">
    <text evidence="1">Heterooligomer of catalytic and regulatory chains.</text>
</comment>
<comment type="similarity">
    <text evidence="1">Belongs to the aspartate/ornithine carbamoyltransferase superfamily. ATCase family.</text>
</comment>